<accession>Q9KNH4</accession>
<organism>
    <name type="scientific">Vibrio cholerae serotype O1 (strain ATCC 39315 / El Tor Inaba N16961)</name>
    <dbReference type="NCBI Taxonomy" id="243277"/>
    <lineage>
        <taxon>Bacteria</taxon>
        <taxon>Pseudomonadati</taxon>
        <taxon>Pseudomonadota</taxon>
        <taxon>Gammaproteobacteria</taxon>
        <taxon>Vibrionales</taxon>
        <taxon>Vibrionaceae</taxon>
        <taxon>Vibrio</taxon>
    </lineage>
</organism>
<keyword id="KW-0066">ATP synthesis</keyword>
<keyword id="KW-0997">Cell inner membrane</keyword>
<keyword id="KW-1003">Cell membrane</keyword>
<keyword id="KW-0139">CF(1)</keyword>
<keyword id="KW-0375">Hydrogen ion transport</keyword>
<keyword id="KW-0406">Ion transport</keyword>
<keyword id="KW-0472">Membrane</keyword>
<keyword id="KW-1185">Reference proteome</keyword>
<keyword id="KW-0813">Transport</keyword>
<proteinExistence type="inferred from homology"/>
<name>ATPG_VIBCH</name>
<reference key="1">
    <citation type="journal article" date="2000" name="Nature">
        <title>DNA sequence of both chromosomes of the cholera pathogen Vibrio cholerae.</title>
        <authorList>
            <person name="Heidelberg J.F."/>
            <person name="Eisen J.A."/>
            <person name="Nelson W.C."/>
            <person name="Clayton R.A."/>
            <person name="Gwinn M.L."/>
            <person name="Dodson R.J."/>
            <person name="Haft D.H."/>
            <person name="Hickey E.K."/>
            <person name="Peterson J.D."/>
            <person name="Umayam L.A."/>
            <person name="Gill S.R."/>
            <person name="Nelson K.E."/>
            <person name="Read T.D."/>
            <person name="Tettelin H."/>
            <person name="Richardson D.L."/>
            <person name="Ermolaeva M.D."/>
            <person name="Vamathevan J.J."/>
            <person name="Bass S."/>
            <person name="Qin H."/>
            <person name="Dragoi I."/>
            <person name="Sellers P."/>
            <person name="McDonald L.A."/>
            <person name="Utterback T.R."/>
            <person name="Fleischmann R.D."/>
            <person name="Nierman W.C."/>
            <person name="White O."/>
            <person name="Salzberg S.L."/>
            <person name="Smith H.O."/>
            <person name="Colwell R.R."/>
            <person name="Mekalanos J.J."/>
            <person name="Venter J.C."/>
            <person name="Fraser C.M."/>
        </authorList>
    </citation>
    <scope>NUCLEOTIDE SEQUENCE [LARGE SCALE GENOMIC DNA]</scope>
    <source>
        <strain>ATCC 39315 / El Tor Inaba N16961</strain>
    </source>
</reference>
<protein>
    <recommendedName>
        <fullName evidence="1">ATP synthase gamma chain</fullName>
    </recommendedName>
    <alternativeName>
        <fullName evidence="1">ATP synthase F1 sector gamma subunit</fullName>
    </alternativeName>
    <alternativeName>
        <fullName evidence="1">F-ATPase gamma subunit</fullName>
    </alternativeName>
</protein>
<dbReference type="EMBL" id="AE003852">
    <property type="protein sequence ID" value="AAF95904.1"/>
    <property type="molecule type" value="Genomic_DNA"/>
</dbReference>
<dbReference type="PIR" id="G82036">
    <property type="entry name" value="G82036"/>
</dbReference>
<dbReference type="RefSeq" id="NP_232391.1">
    <property type="nucleotide sequence ID" value="NC_002505.1"/>
</dbReference>
<dbReference type="RefSeq" id="WP_000896515.1">
    <property type="nucleotide sequence ID" value="NZ_LT906614.1"/>
</dbReference>
<dbReference type="SMR" id="Q9KNH4"/>
<dbReference type="STRING" id="243277.VC_2765"/>
<dbReference type="DNASU" id="2614942"/>
<dbReference type="EnsemblBacteria" id="AAF95904">
    <property type="protein sequence ID" value="AAF95904"/>
    <property type="gene ID" value="VC_2765"/>
</dbReference>
<dbReference type="GeneID" id="69721149"/>
<dbReference type="KEGG" id="vch:VC_2765"/>
<dbReference type="PATRIC" id="fig|243277.26.peg.2640"/>
<dbReference type="eggNOG" id="COG0224">
    <property type="taxonomic scope" value="Bacteria"/>
</dbReference>
<dbReference type="HOGENOM" id="CLU_050669_0_1_6"/>
<dbReference type="Proteomes" id="UP000000584">
    <property type="component" value="Chromosome 1"/>
</dbReference>
<dbReference type="GO" id="GO:0005886">
    <property type="term" value="C:plasma membrane"/>
    <property type="evidence" value="ECO:0007669"/>
    <property type="project" value="UniProtKB-SubCell"/>
</dbReference>
<dbReference type="GO" id="GO:0045259">
    <property type="term" value="C:proton-transporting ATP synthase complex"/>
    <property type="evidence" value="ECO:0007669"/>
    <property type="project" value="UniProtKB-KW"/>
</dbReference>
<dbReference type="GO" id="GO:0005524">
    <property type="term" value="F:ATP binding"/>
    <property type="evidence" value="ECO:0007669"/>
    <property type="project" value="UniProtKB-UniRule"/>
</dbReference>
<dbReference type="GO" id="GO:0046933">
    <property type="term" value="F:proton-transporting ATP synthase activity, rotational mechanism"/>
    <property type="evidence" value="ECO:0007669"/>
    <property type="project" value="UniProtKB-UniRule"/>
</dbReference>
<dbReference type="GO" id="GO:0015986">
    <property type="term" value="P:proton motive force-driven ATP synthesis"/>
    <property type="evidence" value="ECO:0000318"/>
    <property type="project" value="GO_Central"/>
</dbReference>
<dbReference type="GO" id="GO:0042777">
    <property type="term" value="P:proton motive force-driven plasma membrane ATP synthesis"/>
    <property type="evidence" value="ECO:0007669"/>
    <property type="project" value="UniProtKB-UniRule"/>
</dbReference>
<dbReference type="CDD" id="cd12151">
    <property type="entry name" value="F1-ATPase_gamma"/>
    <property type="match status" value="1"/>
</dbReference>
<dbReference type="FunFam" id="1.10.287.80:FF:000005">
    <property type="entry name" value="ATP synthase gamma chain"/>
    <property type="match status" value="1"/>
</dbReference>
<dbReference type="FunFam" id="1.10.287.80:FF:000015">
    <property type="entry name" value="ATP synthase gamma chain"/>
    <property type="match status" value="1"/>
</dbReference>
<dbReference type="FunFam" id="3.40.1380.10:FF:000001">
    <property type="entry name" value="ATP synthase gamma chain"/>
    <property type="match status" value="1"/>
</dbReference>
<dbReference type="Gene3D" id="3.40.1380.10">
    <property type="match status" value="1"/>
</dbReference>
<dbReference type="Gene3D" id="1.10.287.80">
    <property type="entry name" value="ATP synthase, gamma subunit, helix hairpin domain"/>
    <property type="match status" value="2"/>
</dbReference>
<dbReference type="HAMAP" id="MF_00815">
    <property type="entry name" value="ATP_synth_gamma_bact"/>
    <property type="match status" value="1"/>
</dbReference>
<dbReference type="InterPro" id="IPR035968">
    <property type="entry name" value="ATP_synth_F1_ATPase_gsu"/>
</dbReference>
<dbReference type="InterPro" id="IPR000131">
    <property type="entry name" value="ATP_synth_F1_gsu"/>
</dbReference>
<dbReference type="InterPro" id="IPR023632">
    <property type="entry name" value="ATP_synth_F1_gsu_CS"/>
</dbReference>
<dbReference type="NCBIfam" id="TIGR01146">
    <property type="entry name" value="ATPsyn_F1gamma"/>
    <property type="match status" value="1"/>
</dbReference>
<dbReference type="NCBIfam" id="NF004144">
    <property type="entry name" value="PRK05621.1-1"/>
    <property type="match status" value="1"/>
</dbReference>
<dbReference type="PANTHER" id="PTHR11693">
    <property type="entry name" value="ATP SYNTHASE GAMMA CHAIN"/>
    <property type="match status" value="1"/>
</dbReference>
<dbReference type="PANTHER" id="PTHR11693:SF22">
    <property type="entry name" value="ATP SYNTHASE SUBUNIT GAMMA, MITOCHONDRIAL"/>
    <property type="match status" value="1"/>
</dbReference>
<dbReference type="Pfam" id="PF00231">
    <property type="entry name" value="ATP-synt"/>
    <property type="match status" value="1"/>
</dbReference>
<dbReference type="PRINTS" id="PR00126">
    <property type="entry name" value="ATPASEGAMMA"/>
</dbReference>
<dbReference type="SUPFAM" id="SSF52943">
    <property type="entry name" value="ATP synthase (F1-ATPase), gamma subunit"/>
    <property type="match status" value="1"/>
</dbReference>
<dbReference type="PROSITE" id="PS00153">
    <property type="entry name" value="ATPASE_GAMMA"/>
    <property type="match status" value="1"/>
</dbReference>
<evidence type="ECO:0000255" key="1">
    <source>
        <dbReference type="HAMAP-Rule" id="MF_00815"/>
    </source>
</evidence>
<sequence>MAGAKEIRTKIGSVKSTQKITKAMEMVAASKMRRSQDAMESSRPYAQTIRKVIGHVANASLEYRHPYLEEREAKRVGYIIISTDRGLCGGLNINLFKKAITDMQTWKEKGAQIELAIIGSKATAFFNNSGAKVAAQVSGLGDSPSLEDLIGSVGVMLKKYDKGELDRLYLVFNQFVNTMVQKPKIDQLLPLPKSDSEDMQRDHMWDYIYEPEPKPLLDALLLRFIESQVYQGVVENLACEQAARMVAMKAATDNASNLIDDLQLVYNKARQAAITQELSEIVGGAAAV</sequence>
<feature type="chain" id="PRO_0000073411" description="ATP synthase gamma chain">
    <location>
        <begin position="1"/>
        <end position="288"/>
    </location>
</feature>
<gene>
    <name evidence="1" type="primary">atpG</name>
    <name type="ordered locus">VC_2765</name>
</gene>
<comment type="function">
    <text evidence="1">Produces ATP from ADP in the presence of a proton gradient across the membrane. The gamma chain is believed to be important in regulating ATPase activity and the flow of protons through the CF(0) complex.</text>
</comment>
<comment type="subunit">
    <text evidence="1">F-type ATPases have 2 components, CF(1) - the catalytic core - and CF(0) - the membrane proton channel. CF(1) has five subunits: alpha(3), beta(3), gamma(1), delta(1), epsilon(1). CF(0) has three main subunits: a, b and c.</text>
</comment>
<comment type="subcellular location">
    <subcellularLocation>
        <location evidence="1">Cell inner membrane</location>
        <topology evidence="1">Peripheral membrane protein</topology>
    </subcellularLocation>
</comment>
<comment type="similarity">
    <text evidence="1">Belongs to the ATPase gamma chain family.</text>
</comment>